<proteinExistence type="evidence at protein level"/>
<feature type="transit peptide" description="Chloroplast and mitochondrion" evidence="4">
    <location>
        <begin position="1"/>
        <end position="32"/>
    </location>
</feature>
<feature type="chain" id="PRO_0000414850" description="Solanesyl diphosphate synthase 3, chloroplastic/mitochondrial">
    <location>
        <begin position="33"/>
        <end position="422"/>
    </location>
</feature>
<feature type="binding site" evidence="2">
    <location>
        <position position="125"/>
    </location>
    <ligand>
        <name>isopentenyl diphosphate</name>
        <dbReference type="ChEBI" id="CHEBI:128769"/>
    </ligand>
</feature>
<feature type="binding site" evidence="2">
    <location>
        <position position="128"/>
    </location>
    <ligand>
        <name>isopentenyl diphosphate</name>
        <dbReference type="ChEBI" id="CHEBI:128769"/>
    </ligand>
</feature>
<feature type="binding site" evidence="3">
    <location>
        <position position="174"/>
    </location>
    <ligand>
        <name>isopentenyl diphosphate</name>
        <dbReference type="ChEBI" id="CHEBI:128769"/>
    </ligand>
</feature>
<feature type="binding site" evidence="2">
    <location>
        <position position="181"/>
    </location>
    <ligand>
        <name>Mg(2+)</name>
        <dbReference type="ChEBI" id="CHEBI:18420"/>
        <label>1</label>
    </ligand>
</feature>
<feature type="binding site" evidence="2">
    <location>
        <position position="181"/>
    </location>
    <ligand>
        <name>Mg(2+)</name>
        <dbReference type="ChEBI" id="CHEBI:18420"/>
        <label>2</label>
    </ligand>
</feature>
<feature type="binding site" evidence="2">
    <location>
        <position position="185"/>
    </location>
    <ligand>
        <name>Mg(2+)</name>
        <dbReference type="ChEBI" id="CHEBI:18420"/>
        <label>1</label>
    </ligand>
</feature>
<feature type="binding site" evidence="2">
    <location>
        <position position="185"/>
    </location>
    <ligand>
        <name>Mg(2+)</name>
        <dbReference type="ChEBI" id="CHEBI:18420"/>
        <label>2</label>
    </ligand>
</feature>
<feature type="binding site" evidence="1">
    <location>
        <position position="190"/>
    </location>
    <ligand>
        <name>an all-trans-polyprenyl diphosphate</name>
        <dbReference type="ChEBI" id="CHEBI:58914"/>
    </ligand>
</feature>
<feature type="binding site" evidence="2">
    <location>
        <position position="191"/>
    </location>
    <ligand>
        <name>isopentenyl diphosphate</name>
        <dbReference type="ChEBI" id="CHEBI:128769"/>
    </ligand>
</feature>
<feature type="binding site" evidence="1">
    <location>
        <position position="267"/>
    </location>
    <ligand>
        <name>an all-trans-polyprenyl diphosphate</name>
        <dbReference type="ChEBI" id="CHEBI:58914"/>
    </ligand>
</feature>
<feature type="binding site" evidence="1">
    <location>
        <position position="268"/>
    </location>
    <ligand>
        <name>an all-trans-polyprenyl diphosphate</name>
        <dbReference type="ChEBI" id="CHEBI:58914"/>
    </ligand>
</feature>
<feature type="binding site" evidence="1">
    <location>
        <position position="305"/>
    </location>
    <ligand>
        <name>an all-trans-polyprenyl diphosphate</name>
        <dbReference type="ChEBI" id="CHEBI:58914"/>
    </ligand>
</feature>
<feature type="binding site" evidence="1">
    <location>
        <position position="322"/>
    </location>
    <ligand>
        <name>an all-trans-polyprenyl diphosphate</name>
        <dbReference type="ChEBI" id="CHEBI:58914"/>
    </ligand>
</feature>
<feature type="splice variant" id="VSP_042135" description="In isoform 3." evidence="14">
    <location>
        <begin position="1"/>
        <end position="101"/>
    </location>
</feature>
<feature type="splice variant" id="VSP_042136" description="In isoform 2." evidence="10 13">
    <original>K</original>
    <variation>KL</variation>
    <location>
        <position position="48"/>
    </location>
</feature>
<feature type="mutagenesis site" description="Shorter product chain length; when associated with F-236." evidence="7">
    <original>I</original>
    <variation>F</variation>
    <location>
        <position position="173"/>
    </location>
</feature>
<feature type="mutagenesis site" description="Shorter product chain length; when associated with F-173." evidence="7">
    <original>V</original>
    <variation>F</variation>
    <location>
        <position position="236"/>
    </location>
</feature>
<feature type="mutagenesis site" description="No effect; when associated with A-253; A-355 and A-356." evidence="7">
    <original>E</original>
    <variation>A</variation>
    <location>
        <position position="252"/>
    </location>
</feature>
<feature type="mutagenesis site" description="No effect; when associated with A-252; A-355 and A-356." evidence="7">
    <original>Q</original>
    <variation>A</variation>
    <location>
        <position position="253"/>
    </location>
</feature>
<feature type="mutagenesis site" description="No effect; when associated with A-252; A-253 and A-356." evidence="7">
    <original>E</original>
    <variation>A</variation>
    <location>
        <position position="355"/>
    </location>
</feature>
<feature type="mutagenesis site" description="No effect; when associated with A-252; A-253 and A-355." evidence="7">
    <original>K</original>
    <variation>A</variation>
    <location>
        <position position="356"/>
    </location>
</feature>
<feature type="sequence conflict" description="In Ref. 1; CAC16849." evidence="14" ref="1">
    <original>N</original>
    <variation>D</variation>
    <location>
        <position position="140"/>
    </location>
</feature>
<feature type="turn" evidence="18">
    <location>
        <begin position="84"/>
        <end position="88"/>
    </location>
</feature>
<feature type="helix" evidence="18">
    <location>
        <begin position="89"/>
        <end position="97"/>
    </location>
</feature>
<feature type="helix" evidence="18">
    <location>
        <begin position="98"/>
        <end position="101"/>
    </location>
</feature>
<feature type="helix" evidence="19">
    <location>
        <begin position="108"/>
        <end position="115"/>
    </location>
</feature>
<feature type="turn" evidence="19">
    <location>
        <begin position="116"/>
        <end position="118"/>
    </location>
</feature>
<feature type="helix" evidence="18">
    <location>
        <begin position="123"/>
        <end position="136"/>
    </location>
</feature>
<feature type="helix" evidence="18">
    <location>
        <begin position="157"/>
        <end position="182"/>
    </location>
</feature>
<feature type="turn" evidence="19">
    <location>
        <begin position="184"/>
        <end position="186"/>
    </location>
</feature>
<feature type="strand" evidence="19">
    <location>
        <begin position="188"/>
        <end position="190"/>
    </location>
</feature>
<feature type="helix" evidence="19">
    <location>
        <begin position="196"/>
        <end position="199"/>
    </location>
</feature>
<feature type="helix" evidence="18">
    <location>
        <begin position="202"/>
        <end position="222"/>
    </location>
</feature>
<feature type="helix" evidence="18">
    <location>
        <begin position="226"/>
        <end position="247"/>
    </location>
</feature>
<feature type="helix" evidence="18">
    <location>
        <begin position="251"/>
        <end position="254"/>
    </location>
</feature>
<feature type="helix" evidence="18">
    <location>
        <begin position="257"/>
        <end position="268"/>
    </location>
</feature>
<feature type="helix" evidence="18">
    <location>
        <begin position="270"/>
        <end position="281"/>
    </location>
</feature>
<feature type="turn" evidence="18">
    <location>
        <begin position="282"/>
        <end position="284"/>
    </location>
</feature>
<feature type="helix" evidence="18">
    <location>
        <begin position="287"/>
        <end position="314"/>
    </location>
</feature>
<feature type="turn" evidence="18">
    <location>
        <begin position="315"/>
        <end position="318"/>
    </location>
</feature>
<feature type="helix" evidence="18">
    <location>
        <begin position="326"/>
        <end position="329"/>
    </location>
</feature>
<feature type="helix" evidence="18">
    <location>
        <begin position="335"/>
        <end position="343"/>
    </location>
</feature>
<feature type="helix" evidence="18">
    <location>
        <begin position="347"/>
        <end position="352"/>
    </location>
</feature>
<feature type="turn" evidence="18">
    <location>
        <begin position="353"/>
        <end position="356"/>
    </location>
</feature>
<feature type="helix" evidence="18">
    <location>
        <begin position="359"/>
        <end position="370"/>
    </location>
</feature>
<feature type="helix" evidence="18">
    <location>
        <begin position="373"/>
        <end position="392"/>
    </location>
</feature>
<feature type="helix" evidence="18">
    <location>
        <begin position="401"/>
        <end position="419"/>
    </location>
</feature>
<organism>
    <name type="scientific">Arabidopsis thaliana</name>
    <name type="common">Mouse-ear cress</name>
    <dbReference type="NCBI Taxonomy" id="3702"/>
    <lineage>
        <taxon>Eukaryota</taxon>
        <taxon>Viridiplantae</taxon>
        <taxon>Streptophyta</taxon>
        <taxon>Embryophyta</taxon>
        <taxon>Tracheophyta</taxon>
        <taxon>Spermatophyta</taxon>
        <taxon>Magnoliopsida</taxon>
        <taxon>eudicotyledons</taxon>
        <taxon>Gunneridae</taxon>
        <taxon>Pentapetalae</taxon>
        <taxon>rosids</taxon>
        <taxon>malvids</taxon>
        <taxon>Brassicales</taxon>
        <taxon>Brassicaceae</taxon>
        <taxon>Camelineae</taxon>
        <taxon>Arabidopsis</taxon>
    </lineage>
</organism>
<protein>
    <recommendedName>
        <fullName evidence="12">Solanesyl diphosphate synthase 3, chloroplastic/mitochondrial</fullName>
        <ecNumber evidence="7">2.5.1.85</ecNumber>
    </recommendedName>
    <alternativeName>
        <fullName evidence="11">All-trans-nonaprenyl-diphosphate synthase 3 (geranylgeranyl-diphosphate specific)</fullName>
    </alternativeName>
    <alternativeName>
        <fullName evidence="9">Geranyl diphosphate synthase 1</fullName>
    </alternativeName>
    <alternativeName>
        <fullName evidence="11">Trans-type polyprenyl pyrophosphate synthase</fullName>
        <shortName evidence="11">AtPPPS</shortName>
    </alternativeName>
</protein>
<name>SPS3_ARATH</name>
<sequence length="422" mass="46401">MLFTRSVARISSKFLRNRSFYGSSQSLASHRFAIIPDQGHSCSDSPHKGYVCRTTYSLKSPVFGGFSHQLYHQSSSLVEEELDPFSLVADELSLLSNKLREMVLAEVPKLASAAEYFFKRGVQGKQFRSTILLLMATALNVRVPEALIGESTDIVTSELRVRQRGIAEITEMIHVASLLHDDVLDDADTRRGVGSLNVVMGNKMSVLAGDFLLSRACGALAALKNTEVVALLATAVEHLVTGETMEITSSTEQRYSMDYYMQKTYYKTASLISNSCKAVAVLTGQTAEVAVLAFEYGRNLGLAFQLIDDILDFTGTSASLGKGSLSDIRHGVITAPILFAMEEFPQLREVVDQVEKDPRNVDIALEYLGKSKGIQRARELAMEHANLAAAAIGSLPETDNEDVKRSRRALIDLTHRVITRNK</sequence>
<dbReference type="EC" id="2.5.1.85" evidence="7"/>
<dbReference type="EMBL" id="Y17376">
    <property type="protein sequence ID" value="CAC16849.1"/>
    <property type="molecule type" value="mRNA"/>
</dbReference>
<dbReference type="EMBL" id="AC004077">
    <property type="protein sequence ID" value="AAC26705.1"/>
    <property type="status" value="ALT_SEQ"/>
    <property type="molecule type" value="Genomic_DNA"/>
</dbReference>
<dbReference type="EMBL" id="CP002685">
    <property type="protein sequence ID" value="AEC09000.1"/>
    <property type="molecule type" value="Genomic_DNA"/>
</dbReference>
<dbReference type="EMBL" id="CP002685">
    <property type="protein sequence ID" value="AEC09001.1"/>
    <property type="molecule type" value="Genomic_DNA"/>
</dbReference>
<dbReference type="EMBL" id="AY093006">
    <property type="protein sequence ID" value="AAM13005.1"/>
    <property type="molecule type" value="mRNA"/>
</dbReference>
<dbReference type="EMBL" id="BT020524">
    <property type="protein sequence ID" value="AAW39025.1"/>
    <property type="molecule type" value="mRNA"/>
</dbReference>
<dbReference type="PIR" id="A84759">
    <property type="entry name" value="A84759"/>
</dbReference>
<dbReference type="RefSeq" id="NP_001031483.1">
    <molecule id="Q5HZ00-1"/>
    <property type="nucleotide sequence ID" value="NM_001036406.3"/>
</dbReference>
<dbReference type="RefSeq" id="NP_850234.1">
    <molecule id="Q5HZ00-3"/>
    <property type="nucleotide sequence ID" value="NM_179903.3"/>
</dbReference>
<dbReference type="PDB" id="3APZ">
    <property type="method" value="X-ray"/>
    <property type="resolution" value="2.60 A"/>
    <property type="chains" value="A/B=76-422"/>
</dbReference>
<dbReference type="PDB" id="3AQ0">
    <property type="method" value="X-ray"/>
    <property type="resolution" value="2.65 A"/>
    <property type="chains" value="A/B/C/D/E/F/G/H=76-422"/>
</dbReference>
<dbReference type="PDBsum" id="3APZ"/>
<dbReference type="PDBsum" id="3AQ0"/>
<dbReference type="SMR" id="Q5HZ00"/>
<dbReference type="FunCoup" id="Q5HZ00">
    <property type="interactions" value="2402"/>
</dbReference>
<dbReference type="STRING" id="3702.Q5HZ00"/>
<dbReference type="PaxDb" id="3702-AT2G34630.2"/>
<dbReference type="ProteomicsDB" id="228257">
    <molecule id="Q5HZ00-1"/>
</dbReference>
<dbReference type="EnsemblPlants" id="AT2G34630.1">
    <molecule id="Q5HZ00-3"/>
    <property type="protein sequence ID" value="AT2G34630.1"/>
    <property type="gene ID" value="AT2G34630"/>
</dbReference>
<dbReference type="EnsemblPlants" id="AT2G34630.2">
    <molecule id="Q5HZ00-1"/>
    <property type="protein sequence ID" value="AT2G34630.2"/>
    <property type="gene ID" value="AT2G34630"/>
</dbReference>
<dbReference type="GeneID" id="818028"/>
<dbReference type="Gramene" id="AT2G34630.1">
    <molecule id="Q5HZ00-3"/>
    <property type="protein sequence ID" value="AT2G34630.1"/>
    <property type="gene ID" value="AT2G34630"/>
</dbReference>
<dbReference type="Gramene" id="AT2G34630.2">
    <molecule id="Q5HZ00-1"/>
    <property type="protein sequence ID" value="AT2G34630.2"/>
    <property type="gene ID" value="AT2G34630"/>
</dbReference>
<dbReference type="KEGG" id="ath:AT2G34630"/>
<dbReference type="Araport" id="AT2G34630"/>
<dbReference type="TAIR" id="AT2G34630">
    <property type="gene designation" value="GPS1"/>
</dbReference>
<dbReference type="eggNOG" id="KOG0776">
    <property type="taxonomic scope" value="Eukaryota"/>
</dbReference>
<dbReference type="InParanoid" id="Q5HZ00"/>
<dbReference type="OMA" id="AFDYYLH"/>
<dbReference type="OrthoDB" id="9927103at2759"/>
<dbReference type="PhylomeDB" id="Q5HZ00"/>
<dbReference type="BioCyc" id="MetaCyc:AT2G34630-MONOMER"/>
<dbReference type="EvolutionaryTrace" id="Q5HZ00"/>
<dbReference type="PRO" id="PR:Q5HZ00"/>
<dbReference type="Proteomes" id="UP000006548">
    <property type="component" value="Chromosome 2"/>
</dbReference>
<dbReference type="ExpressionAtlas" id="Q5HZ00">
    <property type="expression patterns" value="baseline and differential"/>
</dbReference>
<dbReference type="GO" id="GO:0009507">
    <property type="term" value="C:chloroplast"/>
    <property type="evidence" value="ECO:0000314"/>
    <property type="project" value="TAIR"/>
</dbReference>
<dbReference type="GO" id="GO:0005739">
    <property type="term" value="C:mitochondrion"/>
    <property type="evidence" value="ECO:0000314"/>
    <property type="project" value="TAIR"/>
</dbReference>
<dbReference type="GO" id="GO:0009536">
    <property type="term" value="C:plastid"/>
    <property type="evidence" value="ECO:0000314"/>
    <property type="project" value="TAIR"/>
</dbReference>
<dbReference type="GO" id="GO:0052924">
    <property type="term" value="F:all-trans-nonaprenyl-diphosphate synthase (geranylgeranyl-diphosphate specific) activity"/>
    <property type="evidence" value="ECO:0007669"/>
    <property type="project" value="UniProtKB-EC"/>
</dbReference>
<dbReference type="GO" id="GO:0046872">
    <property type="term" value="F:metal ion binding"/>
    <property type="evidence" value="ECO:0007669"/>
    <property type="project" value="UniProtKB-KW"/>
</dbReference>
<dbReference type="GO" id="GO:0004659">
    <property type="term" value="F:prenyltransferase activity"/>
    <property type="evidence" value="ECO:0000314"/>
    <property type="project" value="TAIR"/>
</dbReference>
<dbReference type="GO" id="GO:0009793">
    <property type="term" value="P:embryo development ending in seed dormancy"/>
    <property type="evidence" value="ECO:0000315"/>
    <property type="project" value="TAIR"/>
</dbReference>
<dbReference type="GO" id="GO:0008299">
    <property type="term" value="P:isoprenoid biosynthetic process"/>
    <property type="evidence" value="ECO:0007669"/>
    <property type="project" value="UniProtKB-KW"/>
</dbReference>
<dbReference type="GO" id="GO:0006744">
    <property type="term" value="P:ubiquinone biosynthetic process"/>
    <property type="evidence" value="ECO:0000315"/>
    <property type="project" value="TAIR"/>
</dbReference>
<dbReference type="CDD" id="cd00685">
    <property type="entry name" value="Trans_IPPS_HT"/>
    <property type="match status" value="1"/>
</dbReference>
<dbReference type="FunFam" id="1.10.600.10:FF:000015">
    <property type="entry name" value="Solanesyl diphosphate synthase 3, chloroplastic/mitochondrial"/>
    <property type="match status" value="1"/>
</dbReference>
<dbReference type="Gene3D" id="1.10.600.10">
    <property type="entry name" value="Farnesyl Diphosphate Synthase"/>
    <property type="match status" value="1"/>
</dbReference>
<dbReference type="InterPro" id="IPR008949">
    <property type="entry name" value="Isoprenoid_synthase_dom_sf"/>
</dbReference>
<dbReference type="InterPro" id="IPR000092">
    <property type="entry name" value="Polyprenyl_synt"/>
</dbReference>
<dbReference type="InterPro" id="IPR033749">
    <property type="entry name" value="Polyprenyl_synt_CS"/>
</dbReference>
<dbReference type="PANTHER" id="PTHR12001:SF69">
    <property type="entry name" value="ALL TRANS-POLYPRENYL-DIPHOSPHATE SYNTHASE PDSS1"/>
    <property type="match status" value="1"/>
</dbReference>
<dbReference type="PANTHER" id="PTHR12001">
    <property type="entry name" value="GERANYLGERANYL PYROPHOSPHATE SYNTHASE"/>
    <property type="match status" value="1"/>
</dbReference>
<dbReference type="Pfam" id="PF00348">
    <property type="entry name" value="polyprenyl_synt"/>
    <property type="match status" value="1"/>
</dbReference>
<dbReference type="SFLD" id="SFLDS00005">
    <property type="entry name" value="Isoprenoid_Synthase_Type_I"/>
    <property type="match status" value="1"/>
</dbReference>
<dbReference type="SUPFAM" id="SSF48576">
    <property type="entry name" value="Terpenoid synthases"/>
    <property type="match status" value="1"/>
</dbReference>
<dbReference type="PROSITE" id="PS00723">
    <property type="entry name" value="POLYPRENYL_SYNTHASE_1"/>
    <property type="match status" value="1"/>
</dbReference>
<dbReference type="PROSITE" id="PS00444">
    <property type="entry name" value="POLYPRENYL_SYNTHASE_2"/>
    <property type="match status" value="1"/>
</dbReference>
<evidence type="ECO:0000250" key="1"/>
<evidence type="ECO:0000250" key="2">
    <source>
        <dbReference type="UniProtKB" id="P14324"/>
    </source>
</evidence>
<evidence type="ECO:0000250" key="3">
    <source>
        <dbReference type="UniProtKB" id="Q12051"/>
    </source>
</evidence>
<evidence type="ECO:0000255" key="4"/>
<evidence type="ECO:0000269" key="5">
    <source>
    </source>
</evidence>
<evidence type="ECO:0000269" key="6">
    <source>
    </source>
</evidence>
<evidence type="ECO:0000269" key="7">
    <source>
    </source>
</evidence>
<evidence type="ECO:0000269" key="8">
    <source>
    </source>
</evidence>
<evidence type="ECO:0000303" key="9">
    <source>
    </source>
</evidence>
<evidence type="ECO:0000303" key="10">
    <source>
    </source>
</evidence>
<evidence type="ECO:0000303" key="11">
    <source>
    </source>
</evidence>
<evidence type="ECO:0000303" key="12">
    <source>
    </source>
</evidence>
<evidence type="ECO:0000303" key="13">
    <source ref="6"/>
</evidence>
<evidence type="ECO:0000305" key="14"/>
<evidence type="ECO:0000305" key="15">
    <source>
    </source>
</evidence>
<evidence type="ECO:0000305" key="16">
    <source>
    </source>
</evidence>
<evidence type="ECO:0000312" key="17">
    <source>
        <dbReference type="Araport" id="AT2G34630"/>
    </source>
</evidence>
<evidence type="ECO:0007829" key="18">
    <source>
        <dbReference type="PDB" id="3APZ"/>
    </source>
</evidence>
<evidence type="ECO:0007829" key="19">
    <source>
        <dbReference type="PDB" id="3AQ0"/>
    </source>
</evidence>
<gene>
    <name evidence="12" type="primary">SPS3</name>
    <name evidence="9" type="synonym">GPS1</name>
    <name evidence="17" type="ordered locus">At2g34630</name>
    <name type="ORF">T31E10.3</name>
</gene>
<keyword id="KW-0002">3D-structure</keyword>
<keyword id="KW-0025">Alternative splicing</keyword>
<keyword id="KW-0150">Chloroplast</keyword>
<keyword id="KW-0414">Isoprene biosynthesis</keyword>
<keyword id="KW-0460">Magnesium</keyword>
<keyword id="KW-0479">Metal-binding</keyword>
<keyword id="KW-0496">Mitochondrion</keyword>
<keyword id="KW-0934">Plastid</keyword>
<keyword id="KW-1185">Reference proteome</keyword>
<keyword id="KW-0808">Transferase</keyword>
<keyword id="KW-0809">Transit peptide</keyword>
<reference key="1">
    <citation type="journal article" date="2000" name="Plant J.">
        <title>Molecular cloning of geranyl diphosphate synthase and compartmentation of monoterpene synthesis in plant cells.</title>
        <authorList>
            <person name="Bouvier F."/>
            <person name="Suire C."/>
            <person name="d'Harlingue A."/>
            <person name="Backhaus R.A."/>
            <person name="Camara B."/>
        </authorList>
    </citation>
    <scope>NUCLEOTIDE SEQUENCE [MRNA] (ISOFORM 1)</scope>
    <scope>FUNCTION</scope>
    <scope>ALTERNATIVE SPLICING</scope>
    <scope>SUBCELLULAR LOCATION</scope>
</reference>
<reference key="2">
    <citation type="journal article" date="2004" name="Plant Cell Physiol.">
        <title>Identification and subcellular localization of two solanesyl diphosphate synthases from Arabidopsis thaliana.</title>
        <authorList>
            <person name="Luo J."/>
            <person name="Saiki R."/>
            <person name="Tatsumi K."/>
            <person name="Nakagawa T."/>
            <person name="Kawamukai M."/>
        </authorList>
    </citation>
    <scope>NUCLEOTIDE SEQUENCE [MRNA]</scope>
</reference>
<reference key="3">
    <citation type="journal article" date="1999" name="Nature">
        <title>Sequence and analysis of chromosome 2 of the plant Arabidopsis thaliana.</title>
        <authorList>
            <person name="Lin X."/>
            <person name="Kaul S."/>
            <person name="Rounsley S.D."/>
            <person name="Shea T.P."/>
            <person name="Benito M.-I."/>
            <person name="Town C.D."/>
            <person name="Fujii C.Y."/>
            <person name="Mason T.M."/>
            <person name="Bowman C.L."/>
            <person name="Barnstead M.E."/>
            <person name="Feldblyum T.V."/>
            <person name="Buell C.R."/>
            <person name="Ketchum K.A."/>
            <person name="Lee J.J."/>
            <person name="Ronning C.M."/>
            <person name="Koo H.L."/>
            <person name="Moffat K.S."/>
            <person name="Cronin L.A."/>
            <person name="Shen M."/>
            <person name="Pai G."/>
            <person name="Van Aken S."/>
            <person name="Umayam L."/>
            <person name="Tallon L.J."/>
            <person name="Gill J.E."/>
            <person name="Adams M.D."/>
            <person name="Carrera A.J."/>
            <person name="Creasy T.H."/>
            <person name="Goodman H.M."/>
            <person name="Somerville C.R."/>
            <person name="Copenhaver G.P."/>
            <person name="Preuss D."/>
            <person name="Nierman W.C."/>
            <person name="White O."/>
            <person name="Eisen J.A."/>
            <person name="Salzberg S.L."/>
            <person name="Fraser C.M."/>
            <person name="Venter J.C."/>
        </authorList>
    </citation>
    <scope>NUCLEOTIDE SEQUENCE [LARGE SCALE GENOMIC DNA]</scope>
    <source>
        <strain>cv. Columbia</strain>
    </source>
</reference>
<reference key="4">
    <citation type="journal article" date="2017" name="Plant J.">
        <title>Araport11: a complete reannotation of the Arabidopsis thaliana reference genome.</title>
        <authorList>
            <person name="Cheng C.Y."/>
            <person name="Krishnakumar V."/>
            <person name="Chan A.P."/>
            <person name="Thibaud-Nissen F."/>
            <person name="Schobel S."/>
            <person name="Town C.D."/>
        </authorList>
    </citation>
    <scope>GENOME REANNOTATION</scope>
    <source>
        <strain>cv. Columbia</strain>
    </source>
</reference>
<reference key="5">
    <citation type="journal article" date="2003" name="Science">
        <title>Empirical analysis of transcriptional activity in the Arabidopsis genome.</title>
        <authorList>
            <person name="Yamada K."/>
            <person name="Lim J."/>
            <person name="Dale J.M."/>
            <person name="Chen H."/>
            <person name="Shinn P."/>
            <person name="Palm C.J."/>
            <person name="Southwick A.M."/>
            <person name="Wu H.C."/>
            <person name="Kim C.J."/>
            <person name="Nguyen M."/>
            <person name="Pham P.K."/>
            <person name="Cheuk R.F."/>
            <person name="Karlin-Newmann G."/>
            <person name="Liu S.X."/>
            <person name="Lam B."/>
            <person name="Sakano H."/>
            <person name="Wu T."/>
            <person name="Yu G."/>
            <person name="Miranda M."/>
            <person name="Quach H.L."/>
            <person name="Tripp M."/>
            <person name="Chang C.H."/>
            <person name="Lee J.M."/>
            <person name="Toriumi M.J."/>
            <person name="Chan M.M."/>
            <person name="Tang C.C."/>
            <person name="Onodera C.S."/>
            <person name="Deng J.M."/>
            <person name="Akiyama K."/>
            <person name="Ansari Y."/>
            <person name="Arakawa T."/>
            <person name="Banh J."/>
            <person name="Banno F."/>
            <person name="Bowser L."/>
            <person name="Brooks S.Y."/>
            <person name="Carninci P."/>
            <person name="Chao Q."/>
            <person name="Choy N."/>
            <person name="Enju A."/>
            <person name="Goldsmith A.D."/>
            <person name="Gurjal M."/>
            <person name="Hansen N.F."/>
            <person name="Hayashizaki Y."/>
            <person name="Johnson-Hopson C."/>
            <person name="Hsuan V.W."/>
            <person name="Iida K."/>
            <person name="Karnes M."/>
            <person name="Khan S."/>
            <person name="Koesema E."/>
            <person name="Ishida J."/>
            <person name="Jiang P.X."/>
            <person name="Jones T."/>
            <person name="Kawai J."/>
            <person name="Kamiya A."/>
            <person name="Meyers C."/>
            <person name="Nakajima M."/>
            <person name="Narusaka M."/>
            <person name="Seki M."/>
            <person name="Sakurai T."/>
            <person name="Satou M."/>
            <person name="Tamse R."/>
            <person name="Vaysberg M."/>
            <person name="Wallender E.K."/>
            <person name="Wong C."/>
            <person name="Yamamura Y."/>
            <person name="Yuan S."/>
            <person name="Shinozaki K."/>
            <person name="Davis R.W."/>
            <person name="Theologis A."/>
            <person name="Ecker J.R."/>
        </authorList>
    </citation>
    <scope>NUCLEOTIDE SEQUENCE [LARGE SCALE MRNA] (ISOFORM 2)</scope>
    <source>
        <strain>cv. Columbia</strain>
    </source>
</reference>
<reference key="6">
    <citation type="submission" date="2005-01" db="EMBL/GenBank/DDBJ databases">
        <title>Arabidopsis ORF clones.</title>
        <authorList>
            <person name="Kim C.J."/>
            <person name="Chen H."/>
            <person name="Cheuk R."/>
            <person name="Shinn P."/>
            <person name="Ecker J.R."/>
        </authorList>
    </citation>
    <scope>NUCLEOTIDE SEQUENCE [LARGE SCALE MRNA] (ISOFORM 2)</scope>
</reference>
<reference key="7">
    <citation type="journal article" date="2007" name="Plant J.">
        <title>Geranyl diphosphate synthase is required for biosynthesis of gibberellins.</title>
        <authorList>
            <person name="van Schie C.C."/>
            <person name="Ament K."/>
            <person name="Schmidt A."/>
            <person name="Lange T."/>
            <person name="Haring M.A."/>
            <person name="Schuurink R.C."/>
        </authorList>
    </citation>
    <scope>FUNCTION</scope>
    <scope>DISRUPTION PHENOTYPE</scope>
</reference>
<reference key="8">
    <citation type="journal article" date="2012" name="Plant J.">
        <title>Gene network reconstruction identifies the authentic trans-prenyl diphosphate synthase that makes the solanesyl moiety of ubiquinone-9 in Arabidopsis.</title>
        <authorList>
            <person name="Ducluzeau A.L."/>
            <person name="Wamboldt Y."/>
            <person name="Elowsky C.G."/>
            <person name="Mackenzie S.A."/>
            <person name="Schuurink R.C."/>
            <person name="Basset G.J."/>
        </authorList>
    </citation>
    <scope>FUNCTION</scope>
    <scope>SUBCELLULAR LOCATION</scope>
    <scope>TISSUE SPECIFICITY</scope>
    <scope>DISRUPTION PHENOTYPE</scope>
</reference>
<reference key="9">
    <citation type="journal article" date="2011" name="Plant Physiol.">
        <title>Structure and mechanism of an Arabidopsis medium/long-chain-length prenyl pyrophosphate synthase.</title>
        <authorList>
            <person name="Hsieh F.L."/>
            <person name="Chang T.H."/>
            <person name="Ko T.P."/>
            <person name="Wang A.H."/>
        </authorList>
    </citation>
    <scope>X-RAY CRYSTALLOGRAPHY (2.60 ANGSTROMS) OF 76-422 IN COMPLEX WITH DIPHOSPHATE AND MAGNESIUM IONS</scope>
    <scope>FUNCTION</scope>
    <scope>CATALYTIC ACTIVITY</scope>
    <scope>SUBUNIT</scope>
    <scope>MUTAGENESIS OF ILE-173; VAL-236; GLU-252; GLN-253; GLU-355 AND LYS-356</scope>
</reference>
<accession>Q5HZ00</accession>
<accession>F4IHY6</accession>
<accession>O64684</accession>
<accession>Q8RWM1</accession>
<accession>Q9FT89</accession>
<comment type="function">
    <text evidence="5 6 7 8">May be involved in the supply of solanesyl diphosphate for ubiquinone-9 (UQ-9) biosynthesis in mitochondria (PubMed:21950843). Synthesizes C25 to C45 medium / long-chain products depending on the type of substrate available (PubMed:21220764). Can use geranyl diphosphate, farnesyl diphosphate or geranylgeranyl diphosphate as substrates, but not dimethylallyl diphosphate (PubMed:11069698, PubMed:17877699, PubMed:21220764).</text>
</comment>
<comment type="catalytic activity">
    <reaction evidence="7">
        <text>5 isopentenyl diphosphate + (2E,6E,10E)-geranylgeranyl diphosphate = all-trans-nonaprenyl diphosphate + 5 diphosphate</text>
        <dbReference type="Rhea" id="RHEA:27594"/>
        <dbReference type="ChEBI" id="CHEBI:33019"/>
        <dbReference type="ChEBI" id="CHEBI:58391"/>
        <dbReference type="ChEBI" id="CHEBI:58756"/>
        <dbReference type="ChEBI" id="CHEBI:128769"/>
        <dbReference type="EC" id="2.5.1.85"/>
    </reaction>
</comment>
<comment type="cofactor">
    <cofactor evidence="7">
        <name>Mg(2+)</name>
        <dbReference type="ChEBI" id="CHEBI:18420"/>
    </cofactor>
    <text evidence="1">Binds 2 Mg(2+) ions per subunit.</text>
</comment>
<comment type="subunit">
    <text evidence="7">Homodimer.</text>
</comment>
<comment type="subcellular location">
    <subcellularLocation>
        <location evidence="5 8">Plastid</location>
        <location evidence="5 8">Chloroplast</location>
    </subcellularLocation>
    <subcellularLocation>
        <location evidence="8">Mitochondrion</location>
    </subcellularLocation>
</comment>
<comment type="alternative products">
    <event type="alternative splicing"/>
    <isoform>
        <id>Q5HZ00-1</id>
        <name>1</name>
        <sequence type="displayed"/>
    </isoform>
    <isoform>
        <id>Q5HZ00-2</id>
        <name>2</name>
        <sequence type="described" ref="VSP_042136"/>
    </isoform>
    <isoform>
        <id>Q5HZ00-3</id>
        <name>3</name>
        <sequence type="described" ref="VSP_042135"/>
    </isoform>
</comment>
<comment type="tissue specificity">
    <text evidence="8">Ubiquitous. Highest expression in seeds and shoot apical meristem.</text>
</comment>
<comment type="disruption phenotype">
    <text evidence="6 8">Embryo lethal.</text>
</comment>
<comment type="miscellaneous">
    <text evidence="8">Silencing of At2g34630 decreases ubiquinone-9 biosynthesis (UQ-9) in mitochondria but has no effect on plastoquinone-9 (PQ-9) biosynthesis in chloroplast, and maybe due to the redundancy with At1g17050.</text>
</comment>
<comment type="similarity">
    <text evidence="14">Belongs to the FPP/GGPP synthase family.</text>
</comment>
<comment type="caution">
    <text evidence="15 16">Was proposed to be a geranyl diphosphate synthase involved in gibberellins biosynthesis.</text>
</comment>
<comment type="sequence caution" evidence="14">
    <conflict type="erroneous gene model prediction">
        <sequence resource="EMBL-CDS" id="AAC26705"/>
    </conflict>
</comment>